<proteinExistence type="inferred from homology"/>
<evidence type="ECO:0000255" key="1">
    <source>
        <dbReference type="HAMAP-Rule" id="MF_00061"/>
    </source>
</evidence>
<sequence>MQGVMSKYQINAPAKINLFLHVVGKSTSGYHVLESVFAFIKLYDTLEIEIGSKNRGVEFVQFSGISKHDNTVQRAIGHLVRRCAPGVAKNVYVKVTKNIPVSAGLAGGSADAAAIIRLLGKNWGISEAGMNGVAASVGSDVPVCLQSRTAFVCGMGENVKLLPHARLPNYVVLVRPNDVYLSTRSVFDAYACKEFSKSIGNPPEASDGLLSLVMQSRNDLTDTAILLVPEVKKILAELQSLGGCILSRMSGSGATCFALFEDGEAASDGVRYLKGRHPEWWVYETEISQ</sequence>
<gene>
    <name evidence="1" type="primary">ispE</name>
    <name type="ordered locus">AM493</name>
</gene>
<comment type="function">
    <text evidence="1">Catalyzes the phosphorylation of the position 2 hydroxy group of 4-diphosphocytidyl-2C-methyl-D-erythritol.</text>
</comment>
<comment type="catalytic activity">
    <reaction evidence="1">
        <text>4-CDP-2-C-methyl-D-erythritol + ATP = 4-CDP-2-C-methyl-D-erythritol 2-phosphate + ADP + H(+)</text>
        <dbReference type="Rhea" id="RHEA:18437"/>
        <dbReference type="ChEBI" id="CHEBI:15378"/>
        <dbReference type="ChEBI" id="CHEBI:30616"/>
        <dbReference type="ChEBI" id="CHEBI:57823"/>
        <dbReference type="ChEBI" id="CHEBI:57919"/>
        <dbReference type="ChEBI" id="CHEBI:456216"/>
        <dbReference type="EC" id="2.7.1.148"/>
    </reaction>
</comment>
<comment type="pathway">
    <text evidence="1">Isoprenoid biosynthesis; isopentenyl diphosphate biosynthesis via DXP pathway; isopentenyl diphosphate from 1-deoxy-D-xylulose 5-phosphate: step 3/6.</text>
</comment>
<comment type="similarity">
    <text evidence="1">Belongs to the GHMP kinase family. IspE subfamily.</text>
</comment>
<reference key="1">
    <citation type="journal article" date="2005" name="Proc. Natl. Acad. Sci. U.S.A.">
        <title>Complete genome sequencing of Anaplasma marginale reveals that the surface is skewed to two superfamilies of outer membrane proteins.</title>
        <authorList>
            <person name="Brayton K.A."/>
            <person name="Kappmeyer L.S."/>
            <person name="Herndon D.R."/>
            <person name="Dark M.J."/>
            <person name="Tibbals D.L."/>
            <person name="Palmer G.H."/>
            <person name="McGuire T.C."/>
            <person name="Knowles D.P. Jr."/>
        </authorList>
    </citation>
    <scope>NUCLEOTIDE SEQUENCE [LARGE SCALE GENOMIC DNA]</scope>
    <source>
        <strain>St. Maries</strain>
    </source>
</reference>
<dbReference type="EC" id="2.7.1.148" evidence="1"/>
<dbReference type="EMBL" id="CP000030">
    <property type="protein sequence ID" value="AAV86525.1"/>
    <property type="molecule type" value="Genomic_DNA"/>
</dbReference>
<dbReference type="SMR" id="Q5PB05"/>
<dbReference type="KEGG" id="ama:AM493"/>
<dbReference type="HOGENOM" id="CLU_053057_1_0_5"/>
<dbReference type="UniPathway" id="UPA00056">
    <property type="reaction ID" value="UER00094"/>
</dbReference>
<dbReference type="GO" id="GO:0050515">
    <property type="term" value="F:4-(cytidine 5'-diphospho)-2-C-methyl-D-erythritol kinase activity"/>
    <property type="evidence" value="ECO:0007669"/>
    <property type="project" value="UniProtKB-UniRule"/>
</dbReference>
<dbReference type="GO" id="GO:0005524">
    <property type="term" value="F:ATP binding"/>
    <property type="evidence" value="ECO:0007669"/>
    <property type="project" value="UniProtKB-UniRule"/>
</dbReference>
<dbReference type="GO" id="GO:0019288">
    <property type="term" value="P:isopentenyl diphosphate biosynthetic process, methylerythritol 4-phosphate pathway"/>
    <property type="evidence" value="ECO:0007669"/>
    <property type="project" value="UniProtKB-UniRule"/>
</dbReference>
<dbReference type="GO" id="GO:0016114">
    <property type="term" value="P:terpenoid biosynthetic process"/>
    <property type="evidence" value="ECO:0007669"/>
    <property type="project" value="InterPro"/>
</dbReference>
<dbReference type="Gene3D" id="3.30.230.10">
    <property type="match status" value="1"/>
</dbReference>
<dbReference type="Gene3D" id="3.30.70.890">
    <property type="entry name" value="GHMP kinase, C-terminal domain"/>
    <property type="match status" value="1"/>
</dbReference>
<dbReference type="HAMAP" id="MF_00061">
    <property type="entry name" value="IspE"/>
    <property type="match status" value="1"/>
</dbReference>
<dbReference type="InterPro" id="IPR013750">
    <property type="entry name" value="GHMP_kinase_C_dom"/>
</dbReference>
<dbReference type="InterPro" id="IPR036554">
    <property type="entry name" value="GHMP_kinase_C_sf"/>
</dbReference>
<dbReference type="InterPro" id="IPR006204">
    <property type="entry name" value="GHMP_kinase_N_dom"/>
</dbReference>
<dbReference type="InterPro" id="IPR004424">
    <property type="entry name" value="IspE"/>
</dbReference>
<dbReference type="InterPro" id="IPR020568">
    <property type="entry name" value="Ribosomal_Su5_D2-typ_SF"/>
</dbReference>
<dbReference type="InterPro" id="IPR014721">
    <property type="entry name" value="Ribsml_uS5_D2-typ_fold_subgr"/>
</dbReference>
<dbReference type="NCBIfam" id="TIGR00154">
    <property type="entry name" value="ispE"/>
    <property type="match status" value="1"/>
</dbReference>
<dbReference type="NCBIfam" id="NF011202">
    <property type="entry name" value="PRK14608.1"/>
    <property type="match status" value="1"/>
</dbReference>
<dbReference type="PANTHER" id="PTHR43527">
    <property type="entry name" value="4-DIPHOSPHOCYTIDYL-2-C-METHYL-D-ERYTHRITOL KINASE, CHLOROPLASTIC"/>
    <property type="match status" value="1"/>
</dbReference>
<dbReference type="PANTHER" id="PTHR43527:SF2">
    <property type="entry name" value="4-DIPHOSPHOCYTIDYL-2-C-METHYL-D-ERYTHRITOL KINASE, CHLOROPLASTIC"/>
    <property type="match status" value="1"/>
</dbReference>
<dbReference type="Pfam" id="PF08544">
    <property type="entry name" value="GHMP_kinases_C"/>
    <property type="match status" value="1"/>
</dbReference>
<dbReference type="Pfam" id="PF00288">
    <property type="entry name" value="GHMP_kinases_N"/>
    <property type="match status" value="1"/>
</dbReference>
<dbReference type="PIRSF" id="PIRSF010376">
    <property type="entry name" value="IspE"/>
    <property type="match status" value="1"/>
</dbReference>
<dbReference type="SUPFAM" id="SSF55060">
    <property type="entry name" value="GHMP Kinase, C-terminal domain"/>
    <property type="match status" value="1"/>
</dbReference>
<dbReference type="SUPFAM" id="SSF54211">
    <property type="entry name" value="Ribosomal protein S5 domain 2-like"/>
    <property type="match status" value="1"/>
</dbReference>
<keyword id="KW-0067">ATP-binding</keyword>
<keyword id="KW-0414">Isoprene biosynthesis</keyword>
<keyword id="KW-0418">Kinase</keyword>
<keyword id="KW-0547">Nucleotide-binding</keyword>
<keyword id="KW-0808">Transferase</keyword>
<accession>Q5PB05</accession>
<organism>
    <name type="scientific">Anaplasma marginale (strain St. Maries)</name>
    <dbReference type="NCBI Taxonomy" id="234826"/>
    <lineage>
        <taxon>Bacteria</taxon>
        <taxon>Pseudomonadati</taxon>
        <taxon>Pseudomonadota</taxon>
        <taxon>Alphaproteobacteria</taxon>
        <taxon>Rickettsiales</taxon>
        <taxon>Anaplasmataceae</taxon>
        <taxon>Anaplasma</taxon>
    </lineage>
</organism>
<name>ISPE_ANAMM</name>
<feature type="chain" id="PRO_0000235060" description="4-diphosphocytidyl-2-C-methyl-D-erythritol kinase">
    <location>
        <begin position="1"/>
        <end position="289"/>
    </location>
</feature>
<feature type="active site" evidence="1">
    <location>
        <position position="15"/>
    </location>
</feature>
<feature type="active site" evidence="1">
    <location>
        <position position="140"/>
    </location>
</feature>
<feature type="binding site" evidence="1">
    <location>
        <begin position="100"/>
        <end position="110"/>
    </location>
    <ligand>
        <name>ATP</name>
        <dbReference type="ChEBI" id="CHEBI:30616"/>
    </ligand>
</feature>
<protein>
    <recommendedName>
        <fullName evidence="1">4-diphosphocytidyl-2-C-methyl-D-erythritol kinase</fullName>
        <shortName evidence="1">CMK</shortName>
        <ecNumber evidence="1">2.7.1.148</ecNumber>
    </recommendedName>
    <alternativeName>
        <fullName evidence="1">4-(cytidine-5'-diphospho)-2-C-methyl-D-erythritol kinase</fullName>
    </alternativeName>
</protein>